<evidence type="ECO:0000269" key="1">
    <source>
    </source>
</evidence>
<evidence type="ECO:0000269" key="2">
    <source>
    </source>
</evidence>
<evidence type="ECO:0000269" key="3">
    <source>
    </source>
</evidence>
<evidence type="ECO:0000303" key="4">
    <source>
    </source>
</evidence>
<evidence type="ECO:0000303" key="5">
    <source>
    </source>
</evidence>
<evidence type="ECO:0000303" key="6">
    <source>
    </source>
</evidence>
<evidence type="ECO:0000303" key="7">
    <source>
    </source>
</evidence>
<evidence type="ECO:0000305" key="8"/>
<accession>Q8WVF1</accession>
<accession>A6NHM5</accession>
<accession>A6NHS9</accession>
<accession>A6NIN9</accession>
<accession>Q4AEJ0</accession>
<accession>Q8N7G2</accession>
<accession>Q8TDF1</accession>
<sequence length="389" mass="44586">MSVRTLPLLFLNLGGEMLYILDQRLRAQNIPGDKARKDEWTEVDRKRVLNDIISTMFNRKFMEELFKPQELYSKKALRTVYERLAHASIMKLNQASMDKLYDLMTMAFKYQVLLCPRPKDVLLVTFNHLDTIKGFIRDSPTILQQVDETLRQLTEIYGGLSAGEFQLIRQTLLIFFQDLHIRVSMFLKDKVQNNNGRFVLPVSGPVPWGTEVPGLIRMFNNKGEEVKRIEFKHGGNYVPAPKEGSFELYGDRVLKLGTNMYSVNQPVETHVSGSSKNLASWTQESIAPNPLAKEELNFLARLMGGMEIKKPSGPEPGFRLNLFTTDEEEEQAALTRPEELSYEVINIQATQDQQRSEELARIMGEFEITEQPRLSTSKGDDLLAMMDEL</sequence>
<feature type="chain" id="PRO_0000251965" description="Protein OSCP1">
    <location>
        <begin position="1"/>
        <end position="389"/>
    </location>
</feature>
<feature type="splice variant" id="VSP_039475" description="In isoform 3 and isoform 4." evidence="4 6 7">
    <location>
        <begin position="38"/>
        <end position="47"/>
    </location>
</feature>
<feature type="splice variant" id="VSP_039476" description="In isoform 4." evidence="8">
    <original>VSMFLKDKVQNNNGRFVLPVSGPVPWGTEVPGLIRMFNNKGEEVKRIEF</original>
    <variation>RECFWKHMQETVHSAQCCLPGVGNYMEDRRRRLTFHYVYPFENFEFCTWAK</variation>
    <location>
        <begin position="183"/>
        <end position="231"/>
    </location>
</feature>
<feature type="splice variant" id="VSP_039477" description="In isoform 4." evidence="8">
    <location>
        <begin position="232"/>
        <end position="389"/>
    </location>
</feature>
<feature type="splice variant" id="VSP_020826" description="In isoform 2." evidence="5">
    <location>
        <begin position="329"/>
        <end position="378"/>
    </location>
</feature>
<feature type="sequence variant" id="VAR_027741" description="In dbSNP:rs11547025." evidence="1 2">
    <original>P</original>
    <variation>R</variation>
    <location>
        <position position="31"/>
    </location>
</feature>
<feature type="sequence variant" id="VAR_056958" description="In dbSNP:rs34409118." evidence="3">
    <original>T</original>
    <variation>A</variation>
    <location>
        <position position="141"/>
    </location>
</feature>
<feature type="sequence variant" id="VAR_027742" description="In dbSNP:rs2359016.">
    <original>K</original>
    <variation>E</variation>
    <location>
        <position position="242"/>
    </location>
</feature>
<feature type="sequence conflict" description="In Ref. 3; BAC05326." evidence="8" ref="3">
    <original>D</original>
    <variation>G</variation>
    <location>
        <position position="51"/>
    </location>
</feature>
<feature type="sequence conflict" description="In Ref. 2; BAE16984." evidence="8" ref="2">
    <original>G</original>
    <variation>R</variation>
    <location>
        <position position="317"/>
    </location>
</feature>
<feature type="sequence conflict" description="In Ref. 1; AAL89738 and 5; AAH18069." evidence="8" ref="1 5">
    <original>S</original>
    <variation>G</variation>
    <location>
        <position position="377"/>
    </location>
</feature>
<name>OSCP1_HUMAN</name>
<reference key="1">
    <citation type="journal article" date="2003" name="J. Cancer Res. Clin. Oncol.">
        <title>Cloning, expression, and mutation analysis of NOR1, a novel human gene down-regulated in HNE-1 nasopharyngeal carcinoma cell line.</title>
        <authorList>
            <person name="Nie X."/>
            <person name="Zhang B."/>
            <person name="Li X."/>
            <person name="Xiang J."/>
            <person name="Xiao B."/>
            <person name="Ma J."/>
            <person name="Zhou M."/>
            <person name="Zhu S."/>
            <person name="Lu H."/>
            <person name="Gui R."/>
            <person name="Shen S."/>
            <person name="Li G."/>
        </authorList>
    </citation>
    <scope>NUCLEOTIDE SEQUENCE [MRNA] (ISOFORM 3)</scope>
    <scope>TISSUE SPECIFICITY</scope>
    <scope>VARIANT ARG-31</scope>
</reference>
<reference key="2">
    <citation type="journal article" date="2005" name="J. Biol. Chem.">
        <title>Isolation and functional characterization of a novel organic solute carrier protein, hOSCP1.</title>
        <authorList>
            <person name="Kobayashi Y."/>
            <person name="Shibusawa A."/>
            <person name="Saito H."/>
            <person name="Ohshiro N."/>
            <person name="Ohbayashi M."/>
            <person name="Kohyama N."/>
            <person name="Yamamoto T."/>
        </authorList>
    </citation>
    <scope>NUCLEOTIDE SEQUENCE [MRNA] (ISOFORM 3)</scope>
    <scope>FUNCTION</scope>
    <scope>BIOPHYSICOCHEMICAL PROPERTIES</scope>
    <scope>TISSUE SPECIFICITY</scope>
    <scope>VARIANT ALA-141</scope>
    <source>
        <tissue>Placenta</tissue>
    </source>
</reference>
<reference key="3">
    <citation type="journal article" date="2004" name="Nat. Genet.">
        <title>Complete sequencing and characterization of 21,243 full-length human cDNAs.</title>
        <authorList>
            <person name="Ota T."/>
            <person name="Suzuki Y."/>
            <person name="Nishikawa T."/>
            <person name="Otsuki T."/>
            <person name="Sugiyama T."/>
            <person name="Irie R."/>
            <person name="Wakamatsu A."/>
            <person name="Hayashi K."/>
            <person name="Sato H."/>
            <person name="Nagai K."/>
            <person name="Kimura K."/>
            <person name="Makita H."/>
            <person name="Sekine M."/>
            <person name="Obayashi M."/>
            <person name="Nishi T."/>
            <person name="Shibahara T."/>
            <person name="Tanaka T."/>
            <person name="Ishii S."/>
            <person name="Yamamoto J."/>
            <person name="Saito K."/>
            <person name="Kawai Y."/>
            <person name="Isono Y."/>
            <person name="Nakamura Y."/>
            <person name="Nagahari K."/>
            <person name="Murakami K."/>
            <person name="Yasuda T."/>
            <person name="Iwayanagi T."/>
            <person name="Wagatsuma M."/>
            <person name="Shiratori A."/>
            <person name="Sudo H."/>
            <person name="Hosoiri T."/>
            <person name="Kaku Y."/>
            <person name="Kodaira H."/>
            <person name="Kondo H."/>
            <person name="Sugawara M."/>
            <person name="Takahashi M."/>
            <person name="Kanda K."/>
            <person name="Yokoi T."/>
            <person name="Furuya T."/>
            <person name="Kikkawa E."/>
            <person name="Omura Y."/>
            <person name="Abe K."/>
            <person name="Kamihara K."/>
            <person name="Katsuta N."/>
            <person name="Sato K."/>
            <person name="Tanikawa M."/>
            <person name="Yamazaki M."/>
            <person name="Ninomiya K."/>
            <person name="Ishibashi T."/>
            <person name="Yamashita H."/>
            <person name="Murakawa K."/>
            <person name="Fujimori K."/>
            <person name="Tanai H."/>
            <person name="Kimata M."/>
            <person name="Watanabe M."/>
            <person name="Hiraoka S."/>
            <person name="Chiba Y."/>
            <person name="Ishida S."/>
            <person name="Ono Y."/>
            <person name="Takiguchi S."/>
            <person name="Watanabe S."/>
            <person name="Yosida M."/>
            <person name="Hotuta T."/>
            <person name="Kusano J."/>
            <person name="Kanehori K."/>
            <person name="Takahashi-Fujii A."/>
            <person name="Hara H."/>
            <person name="Tanase T.-O."/>
            <person name="Nomura Y."/>
            <person name="Togiya S."/>
            <person name="Komai F."/>
            <person name="Hara R."/>
            <person name="Takeuchi K."/>
            <person name="Arita M."/>
            <person name="Imose N."/>
            <person name="Musashino K."/>
            <person name="Yuuki H."/>
            <person name="Oshima A."/>
            <person name="Sasaki N."/>
            <person name="Aotsuka S."/>
            <person name="Yoshikawa Y."/>
            <person name="Matsunawa H."/>
            <person name="Ichihara T."/>
            <person name="Shiohata N."/>
            <person name="Sano S."/>
            <person name="Moriya S."/>
            <person name="Momiyama H."/>
            <person name="Satoh N."/>
            <person name="Takami S."/>
            <person name="Terashima Y."/>
            <person name="Suzuki O."/>
            <person name="Nakagawa S."/>
            <person name="Senoh A."/>
            <person name="Mizoguchi H."/>
            <person name="Goto Y."/>
            <person name="Shimizu F."/>
            <person name="Wakebe H."/>
            <person name="Hishigaki H."/>
            <person name="Watanabe T."/>
            <person name="Sugiyama A."/>
            <person name="Takemoto M."/>
            <person name="Kawakami B."/>
            <person name="Yamazaki M."/>
            <person name="Watanabe K."/>
            <person name="Kumagai A."/>
            <person name="Itakura S."/>
            <person name="Fukuzumi Y."/>
            <person name="Fujimori Y."/>
            <person name="Komiyama M."/>
            <person name="Tashiro H."/>
            <person name="Tanigami A."/>
            <person name="Fujiwara T."/>
            <person name="Ono T."/>
            <person name="Yamada K."/>
            <person name="Fujii Y."/>
            <person name="Ozaki K."/>
            <person name="Hirao M."/>
            <person name="Ohmori Y."/>
            <person name="Kawabata A."/>
            <person name="Hikiji T."/>
            <person name="Kobatake N."/>
            <person name="Inagaki H."/>
            <person name="Ikema Y."/>
            <person name="Okamoto S."/>
            <person name="Okitani R."/>
            <person name="Kawakami T."/>
            <person name="Noguchi S."/>
            <person name="Itoh T."/>
            <person name="Shigeta K."/>
            <person name="Senba T."/>
            <person name="Matsumura K."/>
            <person name="Nakajima Y."/>
            <person name="Mizuno T."/>
            <person name="Morinaga M."/>
            <person name="Sasaki M."/>
            <person name="Togashi T."/>
            <person name="Oyama M."/>
            <person name="Hata H."/>
            <person name="Watanabe M."/>
            <person name="Komatsu T."/>
            <person name="Mizushima-Sugano J."/>
            <person name="Satoh T."/>
            <person name="Shirai Y."/>
            <person name="Takahashi Y."/>
            <person name="Nakagawa K."/>
            <person name="Okumura K."/>
            <person name="Nagase T."/>
            <person name="Nomura N."/>
            <person name="Kikuchi H."/>
            <person name="Masuho Y."/>
            <person name="Yamashita R."/>
            <person name="Nakai K."/>
            <person name="Yada T."/>
            <person name="Nakamura Y."/>
            <person name="Ohara O."/>
            <person name="Isogai T."/>
            <person name="Sugano S."/>
        </authorList>
    </citation>
    <scope>NUCLEOTIDE SEQUENCE [LARGE SCALE MRNA] (ISOFORM 2)</scope>
    <source>
        <tissue>Testis</tissue>
    </source>
</reference>
<reference key="4">
    <citation type="journal article" date="2006" name="Nature">
        <title>The DNA sequence and biological annotation of human chromosome 1.</title>
        <authorList>
            <person name="Gregory S.G."/>
            <person name="Barlow K.F."/>
            <person name="McLay K.E."/>
            <person name="Kaul R."/>
            <person name="Swarbreck D."/>
            <person name="Dunham A."/>
            <person name="Scott C.E."/>
            <person name="Howe K.L."/>
            <person name="Woodfine K."/>
            <person name="Spencer C.C.A."/>
            <person name="Jones M.C."/>
            <person name="Gillson C."/>
            <person name="Searle S."/>
            <person name="Zhou Y."/>
            <person name="Kokocinski F."/>
            <person name="McDonald L."/>
            <person name="Evans R."/>
            <person name="Phillips K."/>
            <person name="Atkinson A."/>
            <person name="Cooper R."/>
            <person name="Jones C."/>
            <person name="Hall R.E."/>
            <person name="Andrews T.D."/>
            <person name="Lloyd C."/>
            <person name="Ainscough R."/>
            <person name="Almeida J.P."/>
            <person name="Ambrose K.D."/>
            <person name="Anderson F."/>
            <person name="Andrew R.W."/>
            <person name="Ashwell R.I.S."/>
            <person name="Aubin K."/>
            <person name="Babbage A.K."/>
            <person name="Bagguley C.L."/>
            <person name="Bailey J."/>
            <person name="Beasley H."/>
            <person name="Bethel G."/>
            <person name="Bird C.P."/>
            <person name="Bray-Allen S."/>
            <person name="Brown J.Y."/>
            <person name="Brown A.J."/>
            <person name="Buckley D."/>
            <person name="Burton J."/>
            <person name="Bye J."/>
            <person name="Carder C."/>
            <person name="Chapman J.C."/>
            <person name="Clark S.Y."/>
            <person name="Clarke G."/>
            <person name="Clee C."/>
            <person name="Cobley V."/>
            <person name="Collier R.E."/>
            <person name="Corby N."/>
            <person name="Coville G.J."/>
            <person name="Davies J."/>
            <person name="Deadman R."/>
            <person name="Dunn M."/>
            <person name="Earthrowl M."/>
            <person name="Ellington A.G."/>
            <person name="Errington H."/>
            <person name="Frankish A."/>
            <person name="Frankland J."/>
            <person name="French L."/>
            <person name="Garner P."/>
            <person name="Garnett J."/>
            <person name="Gay L."/>
            <person name="Ghori M.R.J."/>
            <person name="Gibson R."/>
            <person name="Gilby L.M."/>
            <person name="Gillett W."/>
            <person name="Glithero R.J."/>
            <person name="Grafham D.V."/>
            <person name="Griffiths C."/>
            <person name="Griffiths-Jones S."/>
            <person name="Grocock R."/>
            <person name="Hammond S."/>
            <person name="Harrison E.S.I."/>
            <person name="Hart E."/>
            <person name="Haugen E."/>
            <person name="Heath P.D."/>
            <person name="Holmes S."/>
            <person name="Holt K."/>
            <person name="Howden P.J."/>
            <person name="Hunt A.R."/>
            <person name="Hunt S.E."/>
            <person name="Hunter G."/>
            <person name="Isherwood J."/>
            <person name="James R."/>
            <person name="Johnson C."/>
            <person name="Johnson D."/>
            <person name="Joy A."/>
            <person name="Kay M."/>
            <person name="Kershaw J.K."/>
            <person name="Kibukawa M."/>
            <person name="Kimberley A.M."/>
            <person name="King A."/>
            <person name="Knights A.J."/>
            <person name="Lad H."/>
            <person name="Laird G."/>
            <person name="Lawlor S."/>
            <person name="Leongamornlert D.A."/>
            <person name="Lloyd D.M."/>
            <person name="Loveland J."/>
            <person name="Lovell J."/>
            <person name="Lush M.J."/>
            <person name="Lyne R."/>
            <person name="Martin S."/>
            <person name="Mashreghi-Mohammadi M."/>
            <person name="Matthews L."/>
            <person name="Matthews N.S.W."/>
            <person name="McLaren S."/>
            <person name="Milne S."/>
            <person name="Mistry S."/>
            <person name="Moore M.J.F."/>
            <person name="Nickerson T."/>
            <person name="O'Dell C.N."/>
            <person name="Oliver K."/>
            <person name="Palmeiri A."/>
            <person name="Palmer S.A."/>
            <person name="Parker A."/>
            <person name="Patel D."/>
            <person name="Pearce A.V."/>
            <person name="Peck A.I."/>
            <person name="Pelan S."/>
            <person name="Phelps K."/>
            <person name="Phillimore B.J."/>
            <person name="Plumb R."/>
            <person name="Rajan J."/>
            <person name="Raymond C."/>
            <person name="Rouse G."/>
            <person name="Saenphimmachak C."/>
            <person name="Sehra H.K."/>
            <person name="Sheridan E."/>
            <person name="Shownkeen R."/>
            <person name="Sims S."/>
            <person name="Skuce C.D."/>
            <person name="Smith M."/>
            <person name="Steward C."/>
            <person name="Subramanian S."/>
            <person name="Sycamore N."/>
            <person name="Tracey A."/>
            <person name="Tromans A."/>
            <person name="Van Helmond Z."/>
            <person name="Wall M."/>
            <person name="Wallis J.M."/>
            <person name="White S."/>
            <person name="Whitehead S.L."/>
            <person name="Wilkinson J.E."/>
            <person name="Willey D.L."/>
            <person name="Williams H."/>
            <person name="Wilming L."/>
            <person name="Wray P.W."/>
            <person name="Wu Z."/>
            <person name="Coulson A."/>
            <person name="Vaudin M."/>
            <person name="Sulston J.E."/>
            <person name="Durbin R.M."/>
            <person name="Hubbard T."/>
            <person name="Wooster R."/>
            <person name="Dunham I."/>
            <person name="Carter N.P."/>
            <person name="McVean G."/>
            <person name="Ross M.T."/>
            <person name="Harrow J."/>
            <person name="Olson M.V."/>
            <person name="Beck S."/>
            <person name="Rogers J."/>
            <person name="Bentley D.R."/>
        </authorList>
    </citation>
    <scope>NUCLEOTIDE SEQUENCE [LARGE SCALE GENOMIC DNA]</scope>
</reference>
<reference key="5">
    <citation type="submission" date="2005-09" db="EMBL/GenBank/DDBJ databases">
        <authorList>
            <person name="Mural R.J."/>
            <person name="Istrail S."/>
            <person name="Sutton G.G."/>
            <person name="Florea L."/>
            <person name="Halpern A.L."/>
            <person name="Mobarry C.M."/>
            <person name="Lippert R."/>
            <person name="Walenz B."/>
            <person name="Shatkay H."/>
            <person name="Dew I."/>
            <person name="Miller J.R."/>
            <person name="Flanigan M.J."/>
            <person name="Edwards N.J."/>
            <person name="Bolanos R."/>
            <person name="Fasulo D."/>
            <person name="Halldorsson B.V."/>
            <person name="Hannenhalli S."/>
            <person name="Turner R."/>
            <person name="Yooseph S."/>
            <person name="Lu F."/>
            <person name="Nusskern D.R."/>
            <person name="Shue B.C."/>
            <person name="Zheng X.H."/>
            <person name="Zhong F."/>
            <person name="Delcher A.L."/>
            <person name="Huson D.H."/>
            <person name="Kravitz S.A."/>
            <person name="Mouchard L."/>
            <person name="Reinert K."/>
            <person name="Remington K.A."/>
            <person name="Clark A.G."/>
            <person name="Waterman M.S."/>
            <person name="Eichler E.E."/>
            <person name="Adams M.D."/>
            <person name="Hunkapiller M.W."/>
            <person name="Myers E.W."/>
            <person name="Venter J.C."/>
        </authorList>
    </citation>
    <scope>NUCLEOTIDE SEQUENCE [LARGE SCALE GENOMIC DNA]</scope>
</reference>
<reference key="6">
    <citation type="journal article" date="2004" name="Genome Res.">
        <title>The status, quality, and expansion of the NIH full-length cDNA project: the Mammalian Gene Collection (MGC).</title>
        <authorList>
            <consortium name="The MGC Project Team"/>
        </authorList>
    </citation>
    <scope>NUCLEOTIDE SEQUENCE [LARGE SCALE MRNA] (ISOFORM 3)</scope>
    <scope>VARIANT ARG-31</scope>
    <source>
        <tissue>Brain</tissue>
    </source>
</reference>
<gene>
    <name type="primary">OSCP1</name>
    <name type="synonym">C1orf102</name>
    <name type="synonym">NOR1</name>
</gene>
<organism>
    <name type="scientific">Homo sapiens</name>
    <name type="common">Human</name>
    <dbReference type="NCBI Taxonomy" id="9606"/>
    <lineage>
        <taxon>Eukaryota</taxon>
        <taxon>Metazoa</taxon>
        <taxon>Chordata</taxon>
        <taxon>Craniata</taxon>
        <taxon>Vertebrata</taxon>
        <taxon>Euteleostomi</taxon>
        <taxon>Mammalia</taxon>
        <taxon>Eutheria</taxon>
        <taxon>Euarchontoglires</taxon>
        <taxon>Primates</taxon>
        <taxon>Haplorrhini</taxon>
        <taxon>Catarrhini</taxon>
        <taxon>Hominidae</taxon>
        <taxon>Homo</taxon>
    </lineage>
</organism>
<keyword id="KW-0025">Alternative splicing</keyword>
<keyword id="KW-1003">Cell membrane</keyword>
<keyword id="KW-0472">Membrane</keyword>
<keyword id="KW-1267">Proteomics identification</keyword>
<keyword id="KW-1185">Reference proteome</keyword>
<keyword id="KW-0813">Transport</keyword>
<proteinExistence type="evidence at protein level"/>
<protein>
    <recommendedName>
        <fullName>Protein OSCP1</fullName>
        <shortName>hOSCP1</shortName>
    </recommendedName>
    <alternativeName>
        <fullName>Organic solute transport protein 1</fullName>
    </alternativeName>
    <alternativeName>
        <fullName>Oxidored-nitro domain-containing protein 1</fullName>
    </alternativeName>
</protein>
<comment type="function">
    <text evidence="3">May be involved in drug clearance in the placenta.</text>
</comment>
<comment type="biophysicochemical properties">
    <kinetics>
        <KM evidence="3">35 uM for p-aminohippurate (PAH)</KM>
        <KM evidence="3">62.3 uM for tetraethylammonium</KM>
        <text>In Xenopus laevis oocytes, in a sodium-independent manner.</text>
    </kinetics>
</comment>
<comment type="subcellular location">
    <subcellularLocation>
        <location>Basal cell membrane</location>
    </subcellularLocation>
    <text>Syncytiotrophoblast in placenta.</text>
</comment>
<comment type="alternative products">
    <event type="alternative splicing"/>
    <isoform>
        <id>Q8WVF1-1</id>
        <name>1</name>
        <sequence type="displayed"/>
    </isoform>
    <isoform>
        <id>Q8WVF1-2</id>
        <name>2</name>
        <sequence type="described" ref="VSP_020826"/>
    </isoform>
    <isoform>
        <id>Q8WVF1-3</id>
        <name>3</name>
        <sequence type="described" ref="VSP_039475"/>
    </isoform>
    <isoform>
        <id>Q8WVF1-4</id>
        <name>4</name>
        <sequence type="described" ref="VSP_039475 VSP_039476 VSP_039477"/>
    </isoform>
</comment>
<comment type="tissue specificity">
    <text evidence="1 3">Expressed predominantly in testis, also found in placenta and to a lesser extent in thymus and small intestine; abundantly expressed in tumor-derived cell lines (PubMed:16006562). Ubiquitously expressed (PubMed:12819961).</text>
</comment>
<comment type="miscellaneous">
    <text>May be involved in the development and/or progression of nosopharyngeal carcinoma.</text>
</comment>
<comment type="caution">
    <text evidence="8">The polymorphism 'Glu58Gly' (described in PubMed:12819961) is in fact an error, the G to A change described representing a synonymous mutation that does not induce any amino acid change in Gly-32.</text>
</comment>
<comment type="sequence caution" evidence="8">
    <conflict type="erroneous initiation">
        <sequence resource="EMBL-CDS" id="AAL89738"/>
    </conflict>
    <text>Extended N-terminus.</text>
</comment>
<dbReference type="EMBL" id="AF462348">
    <property type="protein sequence ID" value="AAL89738.1"/>
    <property type="status" value="ALT_INIT"/>
    <property type="molecule type" value="mRNA"/>
</dbReference>
<dbReference type="EMBL" id="AB079075">
    <property type="protein sequence ID" value="BAE16984.1"/>
    <property type="molecule type" value="mRNA"/>
</dbReference>
<dbReference type="EMBL" id="AK098541">
    <property type="protein sequence ID" value="BAC05326.1"/>
    <property type="molecule type" value="mRNA"/>
</dbReference>
<dbReference type="EMBL" id="AC119675">
    <property type="status" value="NOT_ANNOTATED_CDS"/>
    <property type="molecule type" value="Genomic_DNA"/>
</dbReference>
<dbReference type="EMBL" id="CH471059">
    <property type="protein sequence ID" value="EAX07365.1"/>
    <property type="molecule type" value="Genomic_DNA"/>
</dbReference>
<dbReference type="EMBL" id="BC018069">
    <property type="protein sequence ID" value="AAH18069.2"/>
    <property type="molecule type" value="mRNA"/>
</dbReference>
<dbReference type="CCDS" id="CCDS409.2">
    <molecule id="Q8WVF1-3"/>
</dbReference>
<dbReference type="CCDS" id="CCDS410.1">
    <molecule id="Q8WVF1-4"/>
</dbReference>
<dbReference type="CCDS" id="CCDS81301.1">
    <molecule id="Q8WVF1-1"/>
</dbReference>
<dbReference type="RefSeq" id="NP_001317422.1">
    <molecule id="Q8WVF1-1"/>
    <property type="nucleotide sequence ID" value="NM_001330493.2"/>
</dbReference>
<dbReference type="RefSeq" id="NP_659484.4">
    <molecule id="Q8WVF1-3"/>
    <property type="nucleotide sequence ID" value="NM_145047.4"/>
</dbReference>
<dbReference type="RefSeq" id="NP_996668.1">
    <molecule id="Q8WVF1-4"/>
    <property type="nucleotide sequence ID" value="NM_206837.3"/>
</dbReference>
<dbReference type="BioGRID" id="126078">
    <property type="interactions" value="17"/>
</dbReference>
<dbReference type="FunCoup" id="Q8WVF1">
    <property type="interactions" value="495"/>
</dbReference>
<dbReference type="IntAct" id="Q8WVF1">
    <property type="interactions" value="11"/>
</dbReference>
<dbReference type="STRING" id="9606.ENSP00000349052"/>
<dbReference type="TCDB" id="9.B.68.1.1">
    <property type="family name" value="the putative na-independent organic solute carrier protein (oscp1) family"/>
</dbReference>
<dbReference type="iPTMnet" id="Q8WVF1"/>
<dbReference type="PhosphoSitePlus" id="Q8WVF1"/>
<dbReference type="BioMuta" id="OSCP1"/>
<dbReference type="DMDM" id="300669715"/>
<dbReference type="jPOST" id="Q8WVF1"/>
<dbReference type="MassIVE" id="Q8WVF1"/>
<dbReference type="PaxDb" id="9606-ENSP00000235532"/>
<dbReference type="PeptideAtlas" id="Q8WVF1"/>
<dbReference type="ProteomicsDB" id="74786">
    <molecule id="Q8WVF1-1"/>
</dbReference>
<dbReference type="ProteomicsDB" id="74787">
    <molecule id="Q8WVF1-2"/>
</dbReference>
<dbReference type="ProteomicsDB" id="74788">
    <molecule id="Q8WVF1-3"/>
</dbReference>
<dbReference type="ProteomicsDB" id="74789">
    <molecule id="Q8WVF1-4"/>
</dbReference>
<dbReference type="Pumba" id="Q8WVF1"/>
<dbReference type="Antibodypedia" id="31691">
    <property type="antibodies" value="58 antibodies from 18 providers"/>
</dbReference>
<dbReference type="DNASU" id="127700"/>
<dbReference type="Ensembl" id="ENST00000235532.9">
    <molecule id="Q8WVF1-3"/>
    <property type="protein sequence ID" value="ENSP00000235532.5"/>
    <property type="gene ID" value="ENSG00000116885.18"/>
</dbReference>
<dbReference type="Ensembl" id="ENST00000354267.3">
    <molecule id="Q8WVF1-4"/>
    <property type="protein sequence ID" value="ENSP00000346216.3"/>
    <property type="gene ID" value="ENSG00000116885.18"/>
</dbReference>
<dbReference type="Ensembl" id="ENST00000356637.9">
    <molecule id="Q8WVF1-1"/>
    <property type="protein sequence ID" value="ENSP00000349052.5"/>
    <property type="gene ID" value="ENSG00000116885.18"/>
</dbReference>
<dbReference type="GeneID" id="127700"/>
<dbReference type="KEGG" id="hsa:127700"/>
<dbReference type="MANE-Select" id="ENST00000235532.9">
    <molecule id="Q8WVF1-3"/>
    <property type="protein sequence ID" value="ENSP00000235532.5"/>
    <property type="RefSeq nucleotide sequence ID" value="NM_145047.5"/>
    <property type="RefSeq protein sequence ID" value="NP_659484.4"/>
</dbReference>
<dbReference type="UCSC" id="uc001caq.4">
    <molecule id="Q8WVF1-1"/>
    <property type="organism name" value="human"/>
</dbReference>
<dbReference type="AGR" id="HGNC:29971"/>
<dbReference type="CTD" id="127700"/>
<dbReference type="DisGeNET" id="127700"/>
<dbReference type="GeneCards" id="OSCP1"/>
<dbReference type="HGNC" id="HGNC:29971">
    <property type="gene designation" value="OSCP1"/>
</dbReference>
<dbReference type="HPA" id="ENSG00000116885">
    <property type="expression patterns" value="Tissue enhanced (choroid plexus, testis)"/>
</dbReference>
<dbReference type="MIM" id="608854">
    <property type="type" value="gene"/>
</dbReference>
<dbReference type="neXtProt" id="NX_Q8WVF1"/>
<dbReference type="OpenTargets" id="ENSG00000116885"/>
<dbReference type="PharmGKB" id="PA165752125"/>
<dbReference type="VEuPathDB" id="HostDB:ENSG00000116885"/>
<dbReference type="eggNOG" id="KOG4033">
    <property type="taxonomic scope" value="Eukaryota"/>
</dbReference>
<dbReference type="GeneTree" id="ENSGT00390000004808"/>
<dbReference type="HOGENOM" id="CLU_039360_1_0_1"/>
<dbReference type="InParanoid" id="Q8WVF1"/>
<dbReference type="OMA" id="GTMFNKR"/>
<dbReference type="OrthoDB" id="2157380at2759"/>
<dbReference type="PAN-GO" id="Q8WVF1">
    <property type="GO annotations" value="3 GO annotations based on evolutionary models"/>
</dbReference>
<dbReference type="PhylomeDB" id="Q8WVF1"/>
<dbReference type="TreeFam" id="TF105789"/>
<dbReference type="PathwayCommons" id="Q8WVF1"/>
<dbReference type="SignaLink" id="Q8WVF1"/>
<dbReference type="BioGRID-ORCS" id="127700">
    <property type="hits" value="6 hits in 1143 CRISPR screens"/>
</dbReference>
<dbReference type="ChiTaRS" id="OSCP1">
    <property type="organism name" value="human"/>
</dbReference>
<dbReference type="GenomeRNAi" id="127700"/>
<dbReference type="Pharos" id="Q8WVF1">
    <property type="development level" value="Tbio"/>
</dbReference>
<dbReference type="PRO" id="PR:Q8WVF1"/>
<dbReference type="Proteomes" id="UP000005640">
    <property type="component" value="Chromosome 1"/>
</dbReference>
<dbReference type="RNAct" id="Q8WVF1">
    <property type="molecule type" value="protein"/>
</dbReference>
<dbReference type="Bgee" id="ENSG00000116885">
    <property type="expression patterns" value="Expressed in right uterine tube and 101 other cell types or tissues"/>
</dbReference>
<dbReference type="ExpressionAtlas" id="Q8WVF1">
    <property type="expression patterns" value="baseline and differential"/>
</dbReference>
<dbReference type="GO" id="GO:0009925">
    <property type="term" value="C:basal plasma membrane"/>
    <property type="evidence" value="ECO:0000314"/>
    <property type="project" value="UniProtKB"/>
</dbReference>
<dbReference type="GO" id="GO:0005737">
    <property type="term" value="C:cytoplasm"/>
    <property type="evidence" value="ECO:0000314"/>
    <property type="project" value="UniProtKB"/>
</dbReference>
<dbReference type="GO" id="GO:0005886">
    <property type="term" value="C:plasma membrane"/>
    <property type="evidence" value="ECO:0000318"/>
    <property type="project" value="GO_Central"/>
</dbReference>
<dbReference type="GO" id="GO:0022857">
    <property type="term" value="F:transmembrane transporter activity"/>
    <property type="evidence" value="ECO:0000315"/>
    <property type="project" value="UniProtKB"/>
</dbReference>
<dbReference type="GO" id="GO:1990961">
    <property type="term" value="P:xenobiotic detoxification by transmembrane export across the plasma membrane"/>
    <property type="evidence" value="ECO:0000315"/>
    <property type="project" value="UniProtKB"/>
</dbReference>
<dbReference type="InterPro" id="IPR019332">
    <property type="entry name" value="OSCP1"/>
</dbReference>
<dbReference type="PANTHER" id="PTHR21439">
    <property type="entry name" value="OXIDORED-NITRO DOMAIN-CONTAINING PROTEIN"/>
    <property type="match status" value="1"/>
</dbReference>
<dbReference type="PANTHER" id="PTHR21439:SF0">
    <property type="entry name" value="PROTEIN OSCP1"/>
    <property type="match status" value="1"/>
</dbReference>
<dbReference type="Pfam" id="PF10188">
    <property type="entry name" value="Oscp1"/>
    <property type="match status" value="1"/>
</dbReference>